<organismHost>
    <name type="scientific">Bos taurus</name>
    <name type="common">Bovine</name>
    <dbReference type="NCBI Taxonomy" id="9913"/>
</organismHost>
<sequence length="204" mass="23219">MSRGALIVFEGLDKSGKTTQCMNIMESIPANTIKYLNFPQRSTVTGKMIDDYLTRKKTYNDHIVNLLFCANRWEFASFIQEQLEQGITLIVDRYAFSGVAYAAAKGASMTLSKSYESGLPKPDLVIFLESGSKEINRNVGEEIYEDVTFQQKVLQEYKKMIEEGDIHWQIISSEFEEDVKKELIKNIVIEAIHTVTGPVGQLWM</sequence>
<comment type="function">
    <text evidence="1 2">Poxvirus TMP kinase is able to phosphorylate dTMP, dUMP and also dGMP from any purine and pyrimidine nucleoside triphosphate. The large substrate specificity is explained by the presence of a canal connecting the edge of the dimer interface to the TMP base binding pocket, canal not found in the human homolog.</text>
</comment>
<comment type="catalytic activity">
    <reaction evidence="1">
        <text>dTMP + ATP = dTDP + ADP</text>
        <dbReference type="Rhea" id="RHEA:13517"/>
        <dbReference type="ChEBI" id="CHEBI:30616"/>
        <dbReference type="ChEBI" id="CHEBI:58369"/>
        <dbReference type="ChEBI" id="CHEBI:63528"/>
        <dbReference type="ChEBI" id="CHEBI:456216"/>
        <dbReference type="EC" id="2.7.4.9"/>
    </reaction>
</comment>
<comment type="pathway">
    <text>Pyrimidine metabolism; dTTP biosynthesis.</text>
</comment>
<comment type="subunit">
    <text evidence="1">Homodimer; the dimer arrangement is orthogonal and not antiparallel as in human enzyme.</text>
</comment>
<comment type="induction">
    <text>Expressed in the early phase of the viral replicative cycle.</text>
</comment>
<comment type="similarity">
    <text evidence="3">Belongs to the thymidylate kinase family.</text>
</comment>
<comment type="sequence caution" evidence="3">
    <conflict type="erroneous initiation">
        <sequence resource="EMBL-CDS" id="AAO89453"/>
    </conflict>
</comment>
<gene>
    <name type="primary">OPG178</name>
    <name type="synonym">TMK</name>
    <name type="ordered locus">VACWR174</name>
    <name type="ORF">A48R</name>
</gene>
<protein>
    <recommendedName>
        <fullName>Thymidylate kinase</fullName>
        <ecNumber evidence="1">2.7.4.9</ecNumber>
    </recommendedName>
    <alternativeName>
        <fullName>dTMP kinase</fullName>
    </alternativeName>
</protein>
<proteinExistence type="evidence at protein level"/>
<reference key="1">
    <citation type="journal article" date="1989" name="Nucleic Acids Res.">
        <title>Vaccinia virus encodes a thymidylate kinase gene: sequence and transcriptional mapping.</title>
        <authorList>
            <person name="Smith G.L."/>
            <person name="de Carlos A."/>
            <person name="Chan Y.S."/>
        </authorList>
    </citation>
    <scope>NUCLEOTIDE SEQUENCE [GENOMIC DNA]</scope>
</reference>
<reference key="2">
    <citation type="journal article" date="1991" name="J. Gen. Virol.">
        <title>Nucleotide sequence of 42 kbp of vaccinia virus strain WR from near the right inverted terminal repeat.</title>
        <authorList>
            <person name="Smith G.L."/>
            <person name="Chan Y.S."/>
            <person name="Howard S.T."/>
        </authorList>
    </citation>
    <scope>NUCLEOTIDE SEQUENCE [GENOMIC DNA]</scope>
</reference>
<reference key="3">
    <citation type="submission" date="2003-02" db="EMBL/GenBank/DDBJ databases">
        <title>Sequencing of the coding region of Vaccinia-WR to an average 9-fold redundancy and an error rate of 0.16/10kb.</title>
        <authorList>
            <person name="Esposito J.J."/>
            <person name="Frace A.M."/>
            <person name="Sammons S.A."/>
            <person name="Olsen-Rasmussen M."/>
            <person name="Osborne J."/>
            <person name="Wohlhueter R."/>
        </authorList>
    </citation>
    <scope>NUCLEOTIDE SEQUENCE [LARGE SCALE GENOMIC DNA]</scope>
</reference>
<reference key="4">
    <citation type="journal article" date="1991" name="J. Biol. Chem.">
        <title>Vaccinia virus encodes an active thymidylate kinase that complements a cdc8 mutant of Saccharomyces cerevisiae.</title>
        <authorList>
            <person name="Hughes S.J."/>
            <person name="Johnston L.H."/>
            <person name="de Carlos A."/>
            <person name="Smith G.L."/>
        </authorList>
    </citation>
    <scope>FUNCTION</scope>
</reference>
<reference key="5">
    <citation type="journal article" date="2005" name="FEBS J.">
        <title>Substrate specificity of vaccinia virus thymidylate kinase.</title>
        <authorList>
            <person name="Topalis D."/>
            <person name="Collinet B."/>
            <person name="Gasse C."/>
            <person name="Dugue L."/>
            <person name="Balzarini J."/>
            <person name="Pochet S."/>
            <person name="Deville-Bonne D."/>
        </authorList>
    </citation>
    <scope>FUNCTION</scope>
    <scope>SUBUNIT</scope>
    <scope>CATALYTIC ACTIVITY</scope>
</reference>
<name>KTHY_VACCW</name>
<accession>Q80HT9</accession>
<accession>P13410</accession>
<feature type="chain" id="PRO_0000155219" description="Thymidylate kinase">
    <location>
        <begin position="1"/>
        <end position="204"/>
    </location>
</feature>
<feature type="binding site" evidence="3">
    <location>
        <begin position="11"/>
        <end position="18"/>
    </location>
    <ligand>
        <name>ATP</name>
        <dbReference type="ChEBI" id="CHEBI:30616"/>
    </ligand>
</feature>
<dbReference type="EC" id="2.7.4.9" evidence="1"/>
<dbReference type="EMBL" id="X16259">
    <property type="protein sequence ID" value="CAA34345.1"/>
    <property type="molecule type" value="Genomic_DNA"/>
</dbReference>
<dbReference type="EMBL" id="D11079">
    <property type="protein sequence ID" value="BAA01822.1"/>
    <property type="molecule type" value="Genomic_DNA"/>
</dbReference>
<dbReference type="EMBL" id="AY243312">
    <property type="protein sequence ID" value="AAO89453.1"/>
    <property type="status" value="ALT_INIT"/>
    <property type="molecule type" value="Genomic_DNA"/>
</dbReference>
<dbReference type="PIR" id="E42522">
    <property type="entry name" value="KIVZ5W"/>
</dbReference>
<dbReference type="SMR" id="Q80HT9"/>
<dbReference type="KEGG" id="vg:3707709"/>
<dbReference type="UniPathway" id="UPA00575"/>
<dbReference type="Proteomes" id="UP000000344">
    <property type="component" value="Genome"/>
</dbReference>
<dbReference type="GO" id="GO:0005524">
    <property type="term" value="F:ATP binding"/>
    <property type="evidence" value="ECO:0007669"/>
    <property type="project" value="UniProtKB-KW"/>
</dbReference>
<dbReference type="GO" id="GO:0004798">
    <property type="term" value="F:dTMP kinase activity"/>
    <property type="evidence" value="ECO:0007669"/>
    <property type="project" value="UniProtKB-EC"/>
</dbReference>
<dbReference type="GO" id="GO:0004550">
    <property type="term" value="F:nucleoside diphosphate kinase activity"/>
    <property type="evidence" value="ECO:0007669"/>
    <property type="project" value="TreeGrafter"/>
</dbReference>
<dbReference type="GO" id="GO:0006233">
    <property type="term" value="P:dTDP biosynthetic process"/>
    <property type="evidence" value="ECO:0007669"/>
    <property type="project" value="InterPro"/>
</dbReference>
<dbReference type="GO" id="GO:0006235">
    <property type="term" value="P:dTTP biosynthetic process"/>
    <property type="evidence" value="ECO:0007669"/>
    <property type="project" value="UniProtKB-UniPathway"/>
</dbReference>
<dbReference type="GO" id="GO:0006227">
    <property type="term" value="P:dUDP biosynthetic process"/>
    <property type="evidence" value="ECO:0007669"/>
    <property type="project" value="TreeGrafter"/>
</dbReference>
<dbReference type="Gene3D" id="3.40.50.300">
    <property type="entry name" value="P-loop containing nucleotide triphosphate hydrolases"/>
    <property type="match status" value="1"/>
</dbReference>
<dbReference type="InterPro" id="IPR027417">
    <property type="entry name" value="P-loop_NTPase"/>
</dbReference>
<dbReference type="InterPro" id="IPR039430">
    <property type="entry name" value="Thymidylate_kin-like_dom"/>
</dbReference>
<dbReference type="InterPro" id="IPR018095">
    <property type="entry name" value="Thymidylate_kin_CS"/>
</dbReference>
<dbReference type="InterPro" id="IPR018094">
    <property type="entry name" value="Thymidylate_kinase"/>
</dbReference>
<dbReference type="NCBIfam" id="TIGR00041">
    <property type="entry name" value="DTMP_kinase"/>
    <property type="match status" value="1"/>
</dbReference>
<dbReference type="PANTHER" id="PTHR10344">
    <property type="entry name" value="THYMIDYLATE KINASE"/>
    <property type="match status" value="1"/>
</dbReference>
<dbReference type="PANTHER" id="PTHR10344:SF1">
    <property type="entry name" value="THYMIDYLATE KINASE"/>
    <property type="match status" value="1"/>
</dbReference>
<dbReference type="Pfam" id="PF02223">
    <property type="entry name" value="Thymidylate_kin"/>
    <property type="match status" value="1"/>
</dbReference>
<dbReference type="SUPFAM" id="SSF52540">
    <property type="entry name" value="P-loop containing nucleoside triphosphate hydrolases"/>
    <property type="match status" value="1"/>
</dbReference>
<dbReference type="PROSITE" id="PS01331">
    <property type="entry name" value="THYMIDYLATE_KINASE"/>
    <property type="match status" value="1"/>
</dbReference>
<evidence type="ECO:0000269" key="1">
    <source>
    </source>
</evidence>
<evidence type="ECO:0000269" key="2">
    <source>
    </source>
</evidence>
<evidence type="ECO:0000305" key="3"/>
<organism>
    <name type="scientific">Vaccinia virus (strain Western Reserve)</name>
    <name type="common">VACV</name>
    <name type="synonym">Vaccinia virus (strain WR)</name>
    <dbReference type="NCBI Taxonomy" id="10254"/>
    <lineage>
        <taxon>Viruses</taxon>
        <taxon>Varidnaviria</taxon>
        <taxon>Bamfordvirae</taxon>
        <taxon>Nucleocytoviricota</taxon>
        <taxon>Pokkesviricetes</taxon>
        <taxon>Chitovirales</taxon>
        <taxon>Poxviridae</taxon>
        <taxon>Chordopoxvirinae</taxon>
        <taxon>Orthopoxvirus</taxon>
        <taxon>Vaccinia virus</taxon>
    </lineage>
</organism>
<keyword id="KW-0067">ATP-binding</keyword>
<keyword id="KW-0244">Early protein</keyword>
<keyword id="KW-0418">Kinase</keyword>
<keyword id="KW-0545">Nucleotide biosynthesis</keyword>
<keyword id="KW-0547">Nucleotide-binding</keyword>
<keyword id="KW-1185">Reference proteome</keyword>
<keyword id="KW-0808">Transferase</keyword>